<organism>
    <name type="scientific">Paracoccidioides lutzii (strain ATCC MYA-826 / Pb01)</name>
    <name type="common">Paracoccidioides brasiliensis</name>
    <dbReference type="NCBI Taxonomy" id="502779"/>
    <lineage>
        <taxon>Eukaryota</taxon>
        <taxon>Fungi</taxon>
        <taxon>Dikarya</taxon>
        <taxon>Ascomycota</taxon>
        <taxon>Pezizomycotina</taxon>
        <taxon>Eurotiomycetes</taxon>
        <taxon>Eurotiomycetidae</taxon>
        <taxon>Onygenales</taxon>
        <taxon>Ajellomycetaceae</taxon>
        <taxon>Paracoccidioides</taxon>
    </lineage>
</organism>
<comment type="similarity">
    <text evidence="2">Belongs to the heat shock protein 70 family.</text>
</comment>
<dbReference type="EMBL" id="AF386787">
    <property type="protein sequence ID" value="AAK66771.1"/>
    <property type="molecule type" value="mRNA"/>
</dbReference>
<dbReference type="EMBL" id="KN294019">
    <property type="protein sequence ID" value="EEH37585.1"/>
    <property type="molecule type" value="Genomic_DNA"/>
</dbReference>
<dbReference type="RefSeq" id="XP_002790117.1">
    <property type="nucleotide sequence ID" value="XM_002790071.2"/>
</dbReference>
<dbReference type="SMR" id="Q96W30"/>
<dbReference type="STRING" id="502779.Q96W30"/>
<dbReference type="GeneID" id="9093358"/>
<dbReference type="KEGG" id="pbl:PAAG_08003"/>
<dbReference type="VEuPathDB" id="FungiDB:PAAG_08003"/>
<dbReference type="eggNOG" id="KOG0101">
    <property type="taxonomic scope" value="Eukaryota"/>
</dbReference>
<dbReference type="HOGENOM" id="CLU_005965_3_2_1"/>
<dbReference type="OMA" id="AYTKNQD"/>
<dbReference type="OrthoDB" id="2401965at2759"/>
<dbReference type="Proteomes" id="UP000002059">
    <property type="component" value="Partially assembled WGS sequence"/>
</dbReference>
<dbReference type="GO" id="GO:0005524">
    <property type="term" value="F:ATP binding"/>
    <property type="evidence" value="ECO:0007669"/>
    <property type="project" value="UniProtKB-KW"/>
</dbReference>
<dbReference type="GO" id="GO:0140662">
    <property type="term" value="F:ATP-dependent protein folding chaperone"/>
    <property type="evidence" value="ECO:0007669"/>
    <property type="project" value="InterPro"/>
</dbReference>
<dbReference type="CDD" id="cd10233">
    <property type="entry name" value="ASKHA_NBD_HSP70_HSPA1"/>
    <property type="match status" value="1"/>
</dbReference>
<dbReference type="FunFam" id="2.60.34.10:FF:000002">
    <property type="entry name" value="Heat shock 70 kDa"/>
    <property type="match status" value="1"/>
</dbReference>
<dbReference type="FunFam" id="3.90.640.10:FF:000002">
    <property type="entry name" value="Heat shock 70 kDa"/>
    <property type="match status" value="1"/>
</dbReference>
<dbReference type="FunFam" id="3.30.420.40:FF:000172">
    <property type="entry name" value="Heat shock 70 kDa protein"/>
    <property type="match status" value="2"/>
</dbReference>
<dbReference type="FunFam" id="3.30.30.30:FF:000001">
    <property type="entry name" value="heat shock 70 kDa protein-like"/>
    <property type="match status" value="1"/>
</dbReference>
<dbReference type="FunFam" id="3.30.420.40:FF:000028">
    <property type="entry name" value="heat shock 70 kDa protein-like"/>
    <property type="match status" value="1"/>
</dbReference>
<dbReference type="FunFam" id="1.20.1270.10:FF:000021">
    <property type="entry name" value="Heat shock protein 70"/>
    <property type="match status" value="1"/>
</dbReference>
<dbReference type="FunFam" id="3.30.420.40:FF:000026">
    <property type="entry name" value="Heat shock protein 70"/>
    <property type="match status" value="1"/>
</dbReference>
<dbReference type="Gene3D" id="1.20.1270.10">
    <property type="match status" value="1"/>
</dbReference>
<dbReference type="Gene3D" id="3.30.30.30">
    <property type="match status" value="1"/>
</dbReference>
<dbReference type="Gene3D" id="3.30.420.40">
    <property type="match status" value="2"/>
</dbReference>
<dbReference type="Gene3D" id="3.90.640.10">
    <property type="entry name" value="Actin, Chain A, domain 4"/>
    <property type="match status" value="1"/>
</dbReference>
<dbReference type="Gene3D" id="2.60.34.10">
    <property type="entry name" value="Substrate Binding Domain Of DNAk, Chain A, domain 1"/>
    <property type="match status" value="1"/>
</dbReference>
<dbReference type="InterPro" id="IPR043129">
    <property type="entry name" value="ATPase_NBD"/>
</dbReference>
<dbReference type="InterPro" id="IPR018181">
    <property type="entry name" value="Heat_shock_70_CS"/>
</dbReference>
<dbReference type="InterPro" id="IPR029048">
    <property type="entry name" value="HSP70_C_sf"/>
</dbReference>
<dbReference type="InterPro" id="IPR029047">
    <property type="entry name" value="HSP70_peptide-bd_sf"/>
</dbReference>
<dbReference type="InterPro" id="IPR013126">
    <property type="entry name" value="Hsp_70_fam"/>
</dbReference>
<dbReference type="NCBIfam" id="NF001413">
    <property type="entry name" value="PRK00290.1"/>
    <property type="match status" value="1"/>
</dbReference>
<dbReference type="PANTHER" id="PTHR19375">
    <property type="entry name" value="HEAT SHOCK PROTEIN 70KDA"/>
    <property type="match status" value="1"/>
</dbReference>
<dbReference type="Pfam" id="PF00012">
    <property type="entry name" value="HSP70"/>
    <property type="match status" value="1"/>
</dbReference>
<dbReference type="PRINTS" id="PR00301">
    <property type="entry name" value="HEATSHOCK70"/>
</dbReference>
<dbReference type="SUPFAM" id="SSF53067">
    <property type="entry name" value="Actin-like ATPase domain"/>
    <property type="match status" value="2"/>
</dbReference>
<dbReference type="SUPFAM" id="SSF100934">
    <property type="entry name" value="Heat shock protein 70kD (HSP70), C-terminal subdomain"/>
    <property type="match status" value="1"/>
</dbReference>
<dbReference type="SUPFAM" id="SSF100920">
    <property type="entry name" value="Heat shock protein 70kD (HSP70), peptide-binding domain"/>
    <property type="match status" value="1"/>
</dbReference>
<dbReference type="PROSITE" id="PS00297">
    <property type="entry name" value="HSP70_1"/>
    <property type="match status" value="1"/>
</dbReference>
<dbReference type="PROSITE" id="PS00329">
    <property type="entry name" value="HSP70_2"/>
    <property type="match status" value="1"/>
</dbReference>
<dbReference type="PROSITE" id="PS01036">
    <property type="entry name" value="HSP70_3"/>
    <property type="match status" value="1"/>
</dbReference>
<sequence length="654" mass="70792">MAPAIGIDLGTTYSCVGIFRDDRIEIIANDQGNRTTPSFVAFTDTERLIGDAAKNQVAMNPSNTVFDAKRLIGRKFADPEVQSDMKHFPFKVIDKAGKPVISVEFKGEEKQFTPEEISSMVLTKMRETAESYLGGTVNNAVVTVPAYFNDSQRQATKDAGLIAGLNVLRIINEPTAAAIAYGLDKKAEGERNVLIFDLGGGTFDVSLLTIEEGIFEVKSTAGDTHLGGEDFDNRLVNHFVNEFKRKHKKDLSSNARALRRLRTACERAKRTLSSAAQTSIEIDSLYEGIDFYTSITRARFEELCQDLFRSTMDPVERVLRDAKIDKSSVHEIVLVGGSTRIPRIQKLVSDFFNGKEPNKSINPDEAVAYGAAVQAAILSGDTTSKSTNEILLLDVAPLSVGIETAGGVMTPLIKRNTTIPTKKSETFSTFADNQPGVLIQVFEGERARTKDNNLLGKFELTGIPPAPRGVPQIEVTFDVDANGIMNVSALEKGTGKTNKIVITNDKGRLSKEEIERMLAEAEKYKAEDEAEASRISAKNGLESYAYSLRNTISDSKVDEKLDASDKEKLKTEIDKTVSWLDENQTATKEEFEAQQKELESVANPIMMKFYGAGGEGGAPGAGFPGAGGPGGFPGAGAGGAHSGGDDGPTVEEVD</sequence>
<accession>Q96W30</accession>
<accession>C1HB62</accession>
<keyword id="KW-0067">ATP-binding</keyword>
<keyword id="KW-0143">Chaperone</keyword>
<keyword id="KW-0547">Nucleotide-binding</keyword>
<keyword id="KW-1185">Reference proteome</keyword>
<keyword id="KW-0346">Stress response</keyword>
<feature type="chain" id="PRO_0000382652" description="Heat shock 70 kDa protein 2">
    <location>
        <begin position="1"/>
        <end position="654"/>
    </location>
</feature>
<feature type="region of interest" description="Disordered" evidence="1">
    <location>
        <begin position="612"/>
        <end position="654"/>
    </location>
</feature>
<feature type="compositionally biased region" description="Gly residues" evidence="1">
    <location>
        <begin position="612"/>
        <end position="646"/>
    </location>
</feature>
<feature type="sequence conflict" description="In Ref. 1; AAK66771." evidence="2" ref="1">
    <original>G</original>
    <variation>D</variation>
    <location>
        <position position="213"/>
    </location>
</feature>
<reference key="1">
    <citation type="journal article" date="2005" name="Med. Mycol.">
        <title>A new Paracoccidioides brasiliensis 70-kDa heat shock protein reacts with sera from paracoccidioidomycosis patients.</title>
        <authorList>
            <person name="Bisio L.C."/>
            <person name="Silva S.P."/>
            <person name="Pereira I.S."/>
            <person name="Xavier M.A.S."/>
            <person name="Venancio E.J."/>
            <person name="Puccia R."/>
            <person name="de Almeida Soares C.M."/>
            <person name="Felipe M.S.S."/>
        </authorList>
    </citation>
    <scope>NUCLEOTIDE SEQUENCE [MRNA]</scope>
</reference>
<reference key="2">
    <citation type="journal article" date="2011" name="PLoS Genet.">
        <title>Comparative genomic analysis of human fungal pathogens causing paracoccidioidomycosis.</title>
        <authorList>
            <person name="Desjardins C.A."/>
            <person name="Champion M.D."/>
            <person name="Holder J.W."/>
            <person name="Muszewska A."/>
            <person name="Goldberg J."/>
            <person name="Bailao A.M."/>
            <person name="Brigido M.M."/>
            <person name="Ferreira M.E."/>
            <person name="Garcia A.M."/>
            <person name="Grynberg M."/>
            <person name="Gujja S."/>
            <person name="Heiman D.I."/>
            <person name="Henn M.R."/>
            <person name="Kodira C.D."/>
            <person name="Leon-Narvaez H."/>
            <person name="Longo L.V.G."/>
            <person name="Ma L.-J."/>
            <person name="Malavazi I."/>
            <person name="Matsuo A.L."/>
            <person name="Morais F.V."/>
            <person name="Pereira M."/>
            <person name="Rodriguez-Brito S."/>
            <person name="Sakthikumar S."/>
            <person name="Salem-Izacc S.M."/>
            <person name="Sykes S.M."/>
            <person name="Teixeira M.M."/>
            <person name="Vallejo M.C."/>
            <person name="Walter M.E."/>
            <person name="Yandava C."/>
            <person name="Young S."/>
            <person name="Zeng Q."/>
            <person name="Zucker J."/>
            <person name="Felipe M.S."/>
            <person name="Goldman G.H."/>
            <person name="Haas B.J."/>
            <person name="McEwen J.G."/>
            <person name="Nino-Vega G."/>
            <person name="Puccia R."/>
            <person name="San-Blas G."/>
            <person name="Soares C.M."/>
            <person name="Birren B.W."/>
            <person name="Cuomo C.A."/>
        </authorList>
    </citation>
    <scope>NUCLEOTIDE SEQUENCE [LARGE SCALE GENOMIC DNA]</scope>
    <source>
        <strain>ATCC MYA-826 / Pb01</strain>
    </source>
</reference>
<gene>
    <name type="primary">HSP70-2</name>
    <name type="ORF">PAAG_08003</name>
</gene>
<proteinExistence type="evidence at transcript level"/>
<name>HSP72_PARBA</name>
<protein>
    <recommendedName>
        <fullName>Heat shock 70 kDa protein 2</fullName>
    </recommendedName>
</protein>
<evidence type="ECO:0000256" key="1">
    <source>
        <dbReference type="SAM" id="MobiDB-lite"/>
    </source>
</evidence>
<evidence type="ECO:0000305" key="2"/>